<keyword id="KW-0007">Acetylation</keyword>
<keyword id="KW-0509">mRNA transport</keyword>
<keyword id="KW-0539">Nucleus</keyword>
<keyword id="KW-1185">Reference proteome</keyword>
<keyword id="KW-0694">RNA-binding</keyword>
<keyword id="KW-0813">Transport</keyword>
<comment type="function">
    <text evidence="4">Export adapter involved in nuclear export of spliced and unspliced mRNA.</text>
</comment>
<comment type="subunit">
    <text evidence="4">Interacts with PARP1.</text>
</comment>
<comment type="subcellular location">
    <subcellularLocation>
        <location evidence="4 5">Nucleus</location>
        <location evidence="4 5">Nucleoplasm</location>
    </subcellularLocation>
    <subcellularLocation>
        <location evidence="5">Nucleus</location>
        <location evidence="5">Nucleolus</location>
    </subcellularLocation>
</comment>
<comment type="similarity">
    <text evidence="8">Belongs to the ALYREF family.</text>
</comment>
<comment type="sequence caution" evidence="8">
    <conflict type="erroneous gene model prediction">
        <sequence resource="EMBL-CDS" id="AAG51767"/>
    </conflict>
</comment>
<proteinExistence type="evidence at protein level"/>
<gene>
    <name evidence="7" type="primary">ALY3</name>
    <name evidence="6" type="synonym">DIP1</name>
    <name type="synonym">THO4C</name>
    <name evidence="9" type="ordered locus">At1g66260</name>
    <name evidence="10" type="ORF">T6J19.1</name>
</gene>
<sequence>MSDALNMTLDEIVKKSKSERSAAARSGGKGVSRKSGRGRGGPNGVVGGGRGGGPVRRGPLAVNTRPSSSFSINKLARRKRSLPWQNQNDLYEETLRAVGVSGVEVGTTVYITNLDQGVTNEDIRELYAEIGELKRYAIHYDKNGRPSGSAEVVYMRRSDAIQAMRKYNNVLLDGRPMKLEILGGNTESAPVAARVNVTGLNGRMKRSVFIGQGVRGGRVGRGRGSGPSGRRLPLQQNQQGGVTAGRGGFRGRGRGNGGGRGNKSGGRGGKKPVEKSAADLDKDLESYHAEAMNIS</sequence>
<evidence type="ECO:0000250" key="1">
    <source>
        <dbReference type="UniProtKB" id="Q6NQ72"/>
    </source>
</evidence>
<evidence type="ECO:0000255" key="2">
    <source>
        <dbReference type="PROSITE-ProRule" id="PRU00176"/>
    </source>
</evidence>
<evidence type="ECO:0000256" key="3">
    <source>
        <dbReference type="SAM" id="MobiDB-lite"/>
    </source>
</evidence>
<evidence type="ECO:0000269" key="4">
    <source>
    </source>
</evidence>
<evidence type="ECO:0000269" key="5">
    <source>
    </source>
</evidence>
<evidence type="ECO:0000303" key="6">
    <source>
    </source>
</evidence>
<evidence type="ECO:0000303" key="7">
    <source>
    </source>
</evidence>
<evidence type="ECO:0000305" key="8"/>
<evidence type="ECO:0000312" key="9">
    <source>
        <dbReference type="Araport" id="AT1G66260"/>
    </source>
</evidence>
<evidence type="ECO:0000312" key="10">
    <source>
        <dbReference type="EMBL" id="AAG51767.1"/>
    </source>
</evidence>
<name>THO4C_ARATH</name>
<protein>
    <recommendedName>
        <fullName>THO complex subunit 4C</fullName>
    </recommendedName>
    <alternativeName>
        <fullName evidence="7">ALYREF homolog 3</fullName>
        <shortName evidence="7">AtALY3</shortName>
    </alternativeName>
</protein>
<reference key="1">
    <citation type="journal article" date="2001" name="J. Exp. Bot.">
        <title>Arabidopsis coactivator ALY-like proteins, DIP1 and DIP2, interact physically with the DNA-binding domain of the Zn-finger poly(ADP-ribose) polymerase.</title>
        <authorList>
            <person name="Storozhenko S."/>
            <person name="Inze D."/>
            <person name="Van Montagu M."/>
            <person name="Kushnir S."/>
        </authorList>
    </citation>
    <scope>NUCLEOTIDE SEQUENCE [MRNA]</scope>
    <scope>FUNCTION</scope>
    <scope>SUBCELLULAR LOCATION</scope>
    <scope>INTERACTION WITH PARP1</scope>
</reference>
<reference key="2">
    <citation type="journal article" date="2000" name="Nature">
        <title>Sequence and analysis of chromosome 1 of the plant Arabidopsis thaliana.</title>
        <authorList>
            <person name="Theologis A."/>
            <person name="Ecker J.R."/>
            <person name="Palm C.J."/>
            <person name="Federspiel N.A."/>
            <person name="Kaul S."/>
            <person name="White O."/>
            <person name="Alonso J."/>
            <person name="Altafi H."/>
            <person name="Araujo R."/>
            <person name="Bowman C.L."/>
            <person name="Brooks S.Y."/>
            <person name="Buehler E."/>
            <person name="Chan A."/>
            <person name="Chao Q."/>
            <person name="Chen H."/>
            <person name="Cheuk R.F."/>
            <person name="Chin C.W."/>
            <person name="Chung M.K."/>
            <person name="Conn L."/>
            <person name="Conway A.B."/>
            <person name="Conway A.R."/>
            <person name="Creasy T.H."/>
            <person name="Dewar K."/>
            <person name="Dunn P."/>
            <person name="Etgu P."/>
            <person name="Feldblyum T.V."/>
            <person name="Feng J.-D."/>
            <person name="Fong B."/>
            <person name="Fujii C.Y."/>
            <person name="Gill J.E."/>
            <person name="Goldsmith A.D."/>
            <person name="Haas B."/>
            <person name="Hansen N.F."/>
            <person name="Hughes B."/>
            <person name="Huizar L."/>
            <person name="Hunter J.L."/>
            <person name="Jenkins J."/>
            <person name="Johnson-Hopson C."/>
            <person name="Khan S."/>
            <person name="Khaykin E."/>
            <person name="Kim C.J."/>
            <person name="Koo H.L."/>
            <person name="Kremenetskaia I."/>
            <person name="Kurtz D.B."/>
            <person name="Kwan A."/>
            <person name="Lam B."/>
            <person name="Langin-Hooper S."/>
            <person name="Lee A."/>
            <person name="Lee J.M."/>
            <person name="Lenz C.A."/>
            <person name="Li J.H."/>
            <person name="Li Y.-P."/>
            <person name="Lin X."/>
            <person name="Liu S.X."/>
            <person name="Liu Z.A."/>
            <person name="Luros J.S."/>
            <person name="Maiti R."/>
            <person name="Marziali A."/>
            <person name="Militscher J."/>
            <person name="Miranda M."/>
            <person name="Nguyen M."/>
            <person name="Nierman W.C."/>
            <person name="Osborne B.I."/>
            <person name="Pai G."/>
            <person name="Peterson J."/>
            <person name="Pham P.K."/>
            <person name="Rizzo M."/>
            <person name="Rooney T."/>
            <person name="Rowley D."/>
            <person name="Sakano H."/>
            <person name="Salzberg S.L."/>
            <person name="Schwartz J.R."/>
            <person name="Shinn P."/>
            <person name="Southwick A.M."/>
            <person name="Sun H."/>
            <person name="Tallon L.J."/>
            <person name="Tambunga G."/>
            <person name="Toriumi M.J."/>
            <person name="Town C.D."/>
            <person name="Utterback T."/>
            <person name="Van Aken S."/>
            <person name="Vaysberg M."/>
            <person name="Vysotskaia V.S."/>
            <person name="Walker M."/>
            <person name="Wu D."/>
            <person name="Yu G."/>
            <person name="Fraser C.M."/>
            <person name="Venter J.C."/>
            <person name="Davis R.W."/>
        </authorList>
    </citation>
    <scope>NUCLEOTIDE SEQUENCE [LARGE SCALE GENOMIC DNA]</scope>
    <source>
        <strain>cv. Columbia</strain>
    </source>
</reference>
<reference key="3">
    <citation type="journal article" date="2017" name="Plant J.">
        <title>Araport11: a complete reannotation of the Arabidopsis thaliana reference genome.</title>
        <authorList>
            <person name="Cheng C.Y."/>
            <person name="Krishnakumar V."/>
            <person name="Chan A.P."/>
            <person name="Thibaud-Nissen F."/>
            <person name="Schobel S."/>
            <person name="Town C.D."/>
        </authorList>
    </citation>
    <scope>GENOME REANNOTATION</scope>
    <source>
        <strain>cv. Columbia</strain>
    </source>
</reference>
<reference key="4">
    <citation type="journal article" date="2003" name="Science">
        <title>Empirical analysis of transcriptional activity in the Arabidopsis genome.</title>
        <authorList>
            <person name="Yamada K."/>
            <person name="Lim J."/>
            <person name="Dale J.M."/>
            <person name="Chen H."/>
            <person name="Shinn P."/>
            <person name="Palm C.J."/>
            <person name="Southwick A.M."/>
            <person name="Wu H.C."/>
            <person name="Kim C.J."/>
            <person name="Nguyen M."/>
            <person name="Pham P.K."/>
            <person name="Cheuk R.F."/>
            <person name="Karlin-Newmann G."/>
            <person name="Liu S.X."/>
            <person name="Lam B."/>
            <person name="Sakano H."/>
            <person name="Wu T."/>
            <person name="Yu G."/>
            <person name="Miranda M."/>
            <person name="Quach H.L."/>
            <person name="Tripp M."/>
            <person name="Chang C.H."/>
            <person name="Lee J.M."/>
            <person name="Toriumi M.J."/>
            <person name="Chan M.M."/>
            <person name="Tang C.C."/>
            <person name="Onodera C.S."/>
            <person name="Deng J.M."/>
            <person name="Akiyama K."/>
            <person name="Ansari Y."/>
            <person name="Arakawa T."/>
            <person name="Banh J."/>
            <person name="Banno F."/>
            <person name="Bowser L."/>
            <person name="Brooks S.Y."/>
            <person name="Carninci P."/>
            <person name="Chao Q."/>
            <person name="Choy N."/>
            <person name="Enju A."/>
            <person name="Goldsmith A.D."/>
            <person name="Gurjal M."/>
            <person name="Hansen N.F."/>
            <person name="Hayashizaki Y."/>
            <person name="Johnson-Hopson C."/>
            <person name="Hsuan V.W."/>
            <person name="Iida K."/>
            <person name="Karnes M."/>
            <person name="Khan S."/>
            <person name="Koesema E."/>
            <person name="Ishida J."/>
            <person name="Jiang P.X."/>
            <person name="Jones T."/>
            <person name="Kawai J."/>
            <person name="Kamiya A."/>
            <person name="Meyers C."/>
            <person name="Nakajima M."/>
            <person name="Narusaka M."/>
            <person name="Seki M."/>
            <person name="Sakurai T."/>
            <person name="Satou M."/>
            <person name="Tamse R."/>
            <person name="Vaysberg M."/>
            <person name="Wallender E.K."/>
            <person name="Wong C."/>
            <person name="Yamamura Y."/>
            <person name="Yuan S."/>
            <person name="Shinozaki K."/>
            <person name="Davis R.W."/>
            <person name="Theologis A."/>
            <person name="Ecker J.R."/>
        </authorList>
    </citation>
    <scope>NUCLEOTIDE SEQUENCE [LARGE SCALE MRNA]</scope>
    <source>
        <strain>cv. Columbia</strain>
    </source>
</reference>
<reference key="5">
    <citation type="journal article" date="2004" name="Plant Physiol.">
        <title>Relocalization of nuclear ALY proteins to the cytoplasm by the tomato bushy stunt virus P19 pathogenicity protein.</title>
        <authorList>
            <person name="Uhrig J.F."/>
            <person name="Canto T."/>
            <person name="Marshall D."/>
            <person name="MacFarlane S.A."/>
        </authorList>
    </citation>
    <scope>SUBCELLULAR LOCATION</scope>
</reference>
<feature type="initiator methionine" description="Removed" evidence="1">
    <location>
        <position position="1"/>
    </location>
</feature>
<feature type="chain" id="PRO_0000425587" description="THO complex subunit 4C">
    <location>
        <begin position="2"/>
        <end position="295"/>
    </location>
</feature>
<feature type="domain" description="RRM" evidence="2">
    <location>
        <begin position="107"/>
        <end position="184"/>
    </location>
</feature>
<feature type="region of interest" description="Disordered" evidence="3">
    <location>
        <begin position="1"/>
        <end position="67"/>
    </location>
</feature>
<feature type="region of interest" description="Disordered" evidence="3">
    <location>
        <begin position="212"/>
        <end position="295"/>
    </location>
</feature>
<feature type="compositionally biased region" description="Basic and acidic residues" evidence="3">
    <location>
        <begin position="11"/>
        <end position="22"/>
    </location>
</feature>
<feature type="compositionally biased region" description="Gly residues" evidence="3">
    <location>
        <begin position="38"/>
        <end position="55"/>
    </location>
</feature>
<feature type="compositionally biased region" description="Gly residues" evidence="3">
    <location>
        <begin position="213"/>
        <end position="227"/>
    </location>
</feature>
<feature type="compositionally biased region" description="Gly residues" evidence="3">
    <location>
        <begin position="242"/>
        <end position="267"/>
    </location>
</feature>
<feature type="compositionally biased region" description="Basic and acidic residues" evidence="3">
    <location>
        <begin position="271"/>
        <end position="288"/>
    </location>
</feature>
<feature type="modified residue" description="N-acetylserine" evidence="1">
    <location>
        <position position="2"/>
    </location>
</feature>
<feature type="sequence conflict" description="In Ref. 1; CAC01083." evidence="8" ref="1">
    <original>RLPLQQNQ</original>
    <variation>HLPLQHSH</variation>
    <location>
        <begin position="231"/>
        <end position="238"/>
    </location>
</feature>
<feature type="sequence conflict" description="In Ref. 1; CAC01083." evidence="8" ref="1">
    <original>R</original>
    <variation>I</variation>
    <location>
        <position position="252"/>
    </location>
</feature>
<feature type="sequence conflict" description="In Ref. 1; CAC01083." evidence="8" ref="1">
    <original>R</original>
    <variation>I</variation>
    <location>
        <position position="260"/>
    </location>
</feature>
<dbReference type="EMBL" id="AJ278492">
    <property type="protein sequence ID" value="CAC01083.1"/>
    <property type="molecule type" value="mRNA"/>
</dbReference>
<dbReference type="EMBL" id="AC066691">
    <property type="protein sequence ID" value="AAG51767.1"/>
    <property type="status" value="ALT_SEQ"/>
    <property type="molecule type" value="Genomic_DNA"/>
</dbReference>
<dbReference type="EMBL" id="CP002684">
    <property type="protein sequence ID" value="AEE34486.1"/>
    <property type="molecule type" value="Genomic_DNA"/>
</dbReference>
<dbReference type="EMBL" id="CP002684">
    <property type="protein sequence ID" value="AEE34487.1"/>
    <property type="molecule type" value="Genomic_DNA"/>
</dbReference>
<dbReference type="EMBL" id="AF410310">
    <property type="protein sequence ID" value="AAK95296.1"/>
    <property type="molecule type" value="mRNA"/>
</dbReference>
<dbReference type="EMBL" id="AY149925">
    <property type="protein sequence ID" value="AAN31079.1"/>
    <property type="molecule type" value="mRNA"/>
</dbReference>
<dbReference type="PIR" id="F96687">
    <property type="entry name" value="F96687"/>
</dbReference>
<dbReference type="RefSeq" id="NP_001185329.1">
    <property type="nucleotide sequence ID" value="NM_001198400.1"/>
</dbReference>
<dbReference type="RefSeq" id="NP_564871.1">
    <property type="nucleotide sequence ID" value="NM_105297.4"/>
</dbReference>
<dbReference type="SMR" id="Q94EH8"/>
<dbReference type="BioGRID" id="28164">
    <property type="interactions" value="5"/>
</dbReference>
<dbReference type="FunCoup" id="Q94EH8">
    <property type="interactions" value="2887"/>
</dbReference>
<dbReference type="IntAct" id="Q94EH8">
    <property type="interactions" value="1"/>
</dbReference>
<dbReference type="STRING" id="3702.Q94EH8"/>
<dbReference type="iPTMnet" id="Q94EH8"/>
<dbReference type="PaxDb" id="3702-AT1G66260.2"/>
<dbReference type="ProteomicsDB" id="234419"/>
<dbReference type="EnsemblPlants" id="AT1G66260.1">
    <property type="protein sequence ID" value="AT1G66260.1"/>
    <property type="gene ID" value="AT1G66260"/>
</dbReference>
<dbReference type="EnsemblPlants" id="AT1G66260.2">
    <property type="protein sequence ID" value="AT1G66260.2"/>
    <property type="gene ID" value="AT1G66260"/>
</dbReference>
<dbReference type="GeneID" id="842943"/>
<dbReference type="Gramene" id="AT1G66260.1">
    <property type="protein sequence ID" value="AT1G66260.1"/>
    <property type="gene ID" value="AT1G66260"/>
</dbReference>
<dbReference type="Gramene" id="AT1G66260.2">
    <property type="protein sequence ID" value="AT1G66260.2"/>
    <property type="gene ID" value="AT1G66260"/>
</dbReference>
<dbReference type="KEGG" id="ath:AT1G66260"/>
<dbReference type="Araport" id="AT1G66260"/>
<dbReference type="TAIR" id="AT1G66260">
    <property type="gene designation" value="ALY3"/>
</dbReference>
<dbReference type="eggNOG" id="KOG0533">
    <property type="taxonomic scope" value="Eukaryota"/>
</dbReference>
<dbReference type="HOGENOM" id="CLU_052367_0_0_1"/>
<dbReference type="InParanoid" id="Q94EH8"/>
<dbReference type="OMA" id="HDMFDGP"/>
<dbReference type="PhylomeDB" id="Q94EH8"/>
<dbReference type="CD-CODE" id="4299E36E">
    <property type="entry name" value="Nucleolus"/>
</dbReference>
<dbReference type="PRO" id="PR:Q94EH8"/>
<dbReference type="Proteomes" id="UP000006548">
    <property type="component" value="Chromosome 1"/>
</dbReference>
<dbReference type="ExpressionAtlas" id="Q94EH8">
    <property type="expression patterns" value="baseline and differential"/>
</dbReference>
<dbReference type="GO" id="GO:0005739">
    <property type="term" value="C:mitochondrion"/>
    <property type="evidence" value="ECO:0007005"/>
    <property type="project" value="TAIR"/>
</dbReference>
<dbReference type="GO" id="GO:0005730">
    <property type="term" value="C:nucleolus"/>
    <property type="evidence" value="ECO:0000314"/>
    <property type="project" value="UniProtKB"/>
</dbReference>
<dbReference type="GO" id="GO:0005654">
    <property type="term" value="C:nucleoplasm"/>
    <property type="evidence" value="ECO:0000314"/>
    <property type="project" value="UniProtKB"/>
</dbReference>
<dbReference type="GO" id="GO:0005634">
    <property type="term" value="C:nucleus"/>
    <property type="evidence" value="ECO:0000314"/>
    <property type="project" value="TAIR"/>
</dbReference>
<dbReference type="GO" id="GO:0003729">
    <property type="term" value="F:mRNA binding"/>
    <property type="evidence" value="ECO:0000314"/>
    <property type="project" value="TAIR"/>
</dbReference>
<dbReference type="GO" id="GO:0051028">
    <property type="term" value="P:mRNA transport"/>
    <property type="evidence" value="ECO:0007669"/>
    <property type="project" value="UniProtKB-KW"/>
</dbReference>
<dbReference type="GO" id="GO:0006364">
    <property type="term" value="P:rRNA processing"/>
    <property type="evidence" value="ECO:0000315"/>
    <property type="project" value="TAIR"/>
</dbReference>
<dbReference type="CDD" id="cd12680">
    <property type="entry name" value="RRM_THOC4"/>
    <property type="match status" value="1"/>
</dbReference>
<dbReference type="Gene3D" id="3.30.70.330">
    <property type="match status" value="1"/>
</dbReference>
<dbReference type="InterPro" id="IPR051229">
    <property type="entry name" value="ALYREF_mRNA_export"/>
</dbReference>
<dbReference type="InterPro" id="IPR025715">
    <property type="entry name" value="FoP_C"/>
</dbReference>
<dbReference type="InterPro" id="IPR012677">
    <property type="entry name" value="Nucleotide-bd_a/b_plait_sf"/>
</dbReference>
<dbReference type="InterPro" id="IPR035979">
    <property type="entry name" value="RBD_domain_sf"/>
</dbReference>
<dbReference type="InterPro" id="IPR000504">
    <property type="entry name" value="RRM_dom"/>
</dbReference>
<dbReference type="PANTHER" id="PTHR19965">
    <property type="entry name" value="RNA AND EXPORT FACTOR BINDING PROTEIN"/>
    <property type="match status" value="1"/>
</dbReference>
<dbReference type="PANTHER" id="PTHR19965:SF86">
    <property type="entry name" value="THO COMPLEX SUBUNIT 4C"/>
    <property type="match status" value="1"/>
</dbReference>
<dbReference type="Pfam" id="PF13865">
    <property type="entry name" value="FoP_duplication"/>
    <property type="match status" value="1"/>
</dbReference>
<dbReference type="Pfam" id="PF00076">
    <property type="entry name" value="RRM_1"/>
    <property type="match status" value="1"/>
</dbReference>
<dbReference type="SMART" id="SM01218">
    <property type="entry name" value="FoP_duplication"/>
    <property type="match status" value="1"/>
</dbReference>
<dbReference type="SMART" id="SM00360">
    <property type="entry name" value="RRM"/>
    <property type="match status" value="1"/>
</dbReference>
<dbReference type="SUPFAM" id="SSF54928">
    <property type="entry name" value="RNA-binding domain, RBD"/>
    <property type="match status" value="1"/>
</dbReference>
<dbReference type="PROSITE" id="PS50102">
    <property type="entry name" value="RRM"/>
    <property type="match status" value="1"/>
</dbReference>
<accession>Q94EH8</accession>
<accession>Q9C7U4</accession>
<accession>Q9LF77</accession>
<organism>
    <name type="scientific">Arabidopsis thaliana</name>
    <name type="common">Mouse-ear cress</name>
    <dbReference type="NCBI Taxonomy" id="3702"/>
    <lineage>
        <taxon>Eukaryota</taxon>
        <taxon>Viridiplantae</taxon>
        <taxon>Streptophyta</taxon>
        <taxon>Embryophyta</taxon>
        <taxon>Tracheophyta</taxon>
        <taxon>Spermatophyta</taxon>
        <taxon>Magnoliopsida</taxon>
        <taxon>eudicotyledons</taxon>
        <taxon>Gunneridae</taxon>
        <taxon>Pentapetalae</taxon>
        <taxon>rosids</taxon>
        <taxon>malvids</taxon>
        <taxon>Brassicales</taxon>
        <taxon>Brassicaceae</taxon>
        <taxon>Camelineae</taxon>
        <taxon>Arabidopsis</taxon>
    </lineage>
</organism>